<proteinExistence type="inferred from homology"/>
<comment type="function">
    <text evidence="1">Cell wall formation.</text>
</comment>
<comment type="catalytic activity">
    <reaction evidence="1">
        <text>UDP-N-acetyl-alpha-D-muramate + L-alanine + ATP = UDP-N-acetyl-alpha-D-muramoyl-L-alanine + ADP + phosphate + H(+)</text>
        <dbReference type="Rhea" id="RHEA:23372"/>
        <dbReference type="ChEBI" id="CHEBI:15378"/>
        <dbReference type="ChEBI" id="CHEBI:30616"/>
        <dbReference type="ChEBI" id="CHEBI:43474"/>
        <dbReference type="ChEBI" id="CHEBI:57972"/>
        <dbReference type="ChEBI" id="CHEBI:70757"/>
        <dbReference type="ChEBI" id="CHEBI:83898"/>
        <dbReference type="ChEBI" id="CHEBI:456216"/>
        <dbReference type="EC" id="6.3.2.8"/>
    </reaction>
</comment>
<comment type="pathway">
    <text evidence="1">Cell wall biogenesis; peptidoglycan biosynthesis.</text>
</comment>
<comment type="subcellular location">
    <subcellularLocation>
        <location evidence="1">Cytoplasm</location>
    </subcellularLocation>
</comment>
<comment type="similarity">
    <text evidence="1">Belongs to the MurCDEF family.</text>
</comment>
<keyword id="KW-0067">ATP-binding</keyword>
<keyword id="KW-0131">Cell cycle</keyword>
<keyword id="KW-0132">Cell division</keyword>
<keyword id="KW-0133">Cell shape</keyword>
<keyword id="KW-0961">Cell wall biogenesis/degradation</keyword>
<keyword id="KW-0963">Cytoplasm</keyword>
<keyword id="KW-0436">Ligase</keyword>
<keyword id="KW-0547">Nucleotide-binding</keyword>
<keyword id="KW-0573">Peptidoglycan synthesis</keyword>
<evidence type="ECO:0000255" key="1">
    <source>
        <dbReference type="HAMAP-Rule" id="MF_00046"/>
    </source>
</evidence>
<reference key="1">
    <citation type="journal article" date="2005" name="PLoS Biol.">
        <title>Major structural differences and novel potential virulence mechanisms from the genomes of multiple Campylobacter species.</title>
        <authorList>
            <person name="Fouts D.E."/>
            <person name="Mongodin E.F."/>
            <person name="Mandrell R.E."/>
            <person name="Miller W.G."/>
            <person name="Rasko D.A."/>
            <person name="Ravel J."/>
            <person name="Brinkac L.M."/>
            <person name="DeBoy R.T."/>
            <person name="Parker C.T."/>
            <person name="Daugherty S.C."/>
            <person name="Dodson R.J."/>
            <person name="Durkin A.S."/>
            <person name="Madupu R."/>
            <person name="Sullivan S.A."/>
            <person name="Shetty J.U."/>
            <person name="Ayodeji M.A."/>
            <person name="Shvartsbeyn A."/>
            <person name="Schatz M.C."/>
            <person name="Badger J.H."/>
            <person name="Fraser C.M."/>
            <person name="Nelson K.E."/>
        </authorList>
    </citation>
    <scope>NUCLEOTIDE SEQUENCE [LARGE SCALE GENOMIC DNA]</scope>
    <source>
        <strain>RM1221</strain>
    </source>
</reference>
<protein>
    <recommendedName>
        <fullName evidence="1">UDP-N-acetylmuramate--L-alanine ligase</fullName>
        <ecNumber evidence="1">6.3.2.8</ecNumber>
    </recommendedName>
    <alternativeName>
        <fullName evidence="1">UDP-N-acetylmuramoyl-L-alanine synthetase</fullName>
    </alternativeName>
</protein>
<organism>
    <name type="scientific">Campylobacter jejuni (strain RM1221)</name>
    <dbReference type="NCBI Taxonomy" id="195099"/>
    <lineage>
        <taxon>Bacteria</taxon>
        <taxon>Pseudomonadati</taxon>
        <taxon>Campylobacterota</taxon>
        <taxon>Epsilonproteobacteria</taxon>
        <taxon>Campylobacterales</taxon>
        <taxon>Campylobacteraceae</taxon>
        <taxon>Campylobacter</taxon>
    </lineage>
</organism>
<feature type="chain" id="PRO_0000182074" description="UDP-N-acetylmuramate--L-alanine ligase">
    <location>
        <begin position="1"/>
        <end position="431"/>
    </location>
</feature>
<feature type="binding site" evidence="1">
    <location>
        <begin position="108"/>
        <end position="114"/>
    </location>
    <ligand>
        <name>ATP</name>
        <dbReference type="ChEBI" id="CHEBI:30616"/>
    </ligand>
</feature>
<gene>
    <name evidence="1" type="primary">murC</name>
    <name type="ordered locus">CJE1198</name>
</gene>
<dbReference type="EC" id="6.3.2.8" evidence="1"/>
<dbReference type="EMBL" id="CP000025">
    <property type="protein sequence ID" value="AAW35523.1"/>
    <property type="molecule type" value="Genomic_DNA"/>
</dbReference>
<dbReference type="SMR" id="Q5HU47"/>
<dbReference type="KEGG" id="cjr:CJE1198"/>
<dbReference type="HOGENOM" id="CLU_028104_2_2_7"/>
<dbReference type="UniPathway" id="UPA00219"/>
<dbReference type="GO" id="GO:0005737">
    <property type="term" value="C:cytoplasm"/>
    <property type="evidence" value="ECO:0007669"/>
    <property type="project" value="UniProtKB-SubCell"/>
</dbReference>
<dbReference type="GO" id="GO:0005524">
    <property type="term" value="F:ATP binding"/>
    <property type="evidence" value="ECO:0007669"/>
    <property type="project" value="UniProtKB-UniRule"/>
</dbReference>
<dbReference type="GO" id="GO:0008763">
    <property type="term" value="F:UDP-N-acetylmuramate-L-alanine ligase activity"/>
    <property type="evidence" value="ECO:0007669"/>
    <property type="project" value="UniProtKB-UniRule"/>
</dbReference>
<dbReference type="GO" id="GO:0051301">
    <property type="term" value="P:cell division"/>
    <property type="evidence" value="ECO:0007669"/>
    <property type="project" value="UniProtKB-KW"/>
</dbReference>
<dbReference type="GO" id="GO:0071555">
    <property type="term" value="P:cell wall organization"/>
    <property type="evidence" value="ECO:0007669"/>
    <property type="project" value="UniProtKB-KW"/>
</dbReference>
<dbReference type="GO" id="GO:0009252">
    <property type="term" value="P:peptidoglycan biosynthetic process"/>
    <property type="evidence" value="ECO:0007669"/>
    <property type="project" value="UniProtKB-UniRule"/>
</dbReference>
<dbReference type="GO" id="GO:0008360">
    <property type="term" value="P:regulation of cell shape"/>
    <property type="evidence" value="ECO:0007669"/>
    <property type="project" value="UniProtKB-KW"/>
</dbReference>
<dbReference type="Gene3D" id="3.90.190.20">
    <property type="entry name" value="Mur ligase, C-terminal domain"/>
    <property type="match status" value="1"/>
</dbReference>
<dbReference type="Gene3D" id="3.40.1190.10">
    <property type="entry name" value="Mur-like, catalytic domain"/>
    <property type="match status" value="1"/>
</dbReference>
<dbReference type="Gene3D" id="3.40.50.720">
    <property type="entry name" value="NAD(P)-binding Rossmann-like Domain"/>
    <property type="match status" value="1"/>
</dbReference>
<dbReference type="HAMAP" id="MF_00046">
    <property type="entry name" value="MurC"/>
    <property type="match status" value="1"/>
</dbReference>
<dbReference type="InterPro" id="IPR036565">
    <property type="entry name" value="Mur-like_cat_sf"/>
</dbReference>
<dbReference type="InterPro" id="IPR004101">
    <property type="entry name" value="Mur_ligase_C"/>
</dbReference>
<dbReference type="InterPro" id="IPR036615">
    <property type="entry name" value="Mur_ligase_C_dom_sf"/>
</dbReference>
<dbReference type="InterPro" id="IPR013221">
    <property type="entry name" value="Mur_ligase_cen"/>
</dbReference>
<dbReference type="InterPro" id="IPR000713">
    <property type="entry name" value="Mur_ligase_N"/>
</dbReference>
<dbReference type="InterPro" id="IPR050061">
    <property type="entry name" value="MurCDEF_pg_biosynth"/>
</dbReference>
<dbReference type="InterPro" id="IPR005758">
    <property type="entry name" value="UDP-N-AcMur_Ala_ligase_MurC"/>
</dbReference>
<dbReference type="NCBIfam" id="TIGR01082">
    <property type="entry name" value="murC"/>
    <property type="match status" value="1"/>
</dbReference>
<dbReference type="PANTHER" id="PTHR43445:SF3">
    <property type="entry name" value="UDP-N-ACETYLMURAMATE--L-ALANINE LIGASE"/>
    <property type="match status" value="1"/>
</dbReference>
<dbReference type="PANTHER" id="PTHR43445">
    <property type="entry name" value="UDP-N-ACETYLMURAMATE--L-ALANINE LIGASE-RELATED"/>
    <property type="match status" value="1"/>
</dbReference>
<dbReference type="Pfam" id="PF01225">
    <property type="entry name" value="Mur_ligase"/>
    <property type="match status" value="1"/>
</dbReference>
<dbReference type="Pfam" id="PF02875">
    <property type="entry name" value="Mur_ligase_C"/>
    <property type="match status" value="1"/>
</dbReference>
<dbReference type="Pfam" id="PF08245">
    <property type="entry name" value="Mur_ligase_M"/>
    <property type="match status" value="1"/>
</dbReference>
<dbReference type="SUPFAM" id="SSF51984">
    <property type="entry name" value="MurCD N-terminal domain"/>
    <property type="match status" value="1"/>
</dbReference>
<dbReference type="SUPFAM" id="SSF53623">
    <property type="entry name" value="MurD-like peptide ligases, catalytic domain"/>
    <property type="match status" value="1"/>
</dbReference>
<dbReference type="SUPFAM" id="SSF53244">
    <property type="entry name" value="MurD-like peptide ligases, peptide-binding domain"/>
    <property type="match status" value="1"/>
</dbReference>
<name>MURC_CAMJR</name>
<accession>Q5HU47</accession>
<sequence>MQNIHFIGIGGIGISALARFLKEKGFKISGSDLKESKITKELEKEGVKVSIPHHKDNILNKDLVIYSAAIKEENPEFKHAKELGIKCLSRKEALPLILEDKRVFAVAGAHGKSTTSSILASLLDDASVIIGAILKEFGSNMIYKESQNLVFEADESDSSFLNSNPYLAIVTNAEAEHLDHYGNEVSKLHHAYAEFLDTAKIRVINAEDEFLKNYKNESTKLYPSKDIKNCTMRIENFKPFTSFELKDLGEFKVFGMGYHLALDASLAILAALNFLDIETIRTRLKNYQGIKKRFDILYADENLVLIDDYGHHPTEIKATLSAAQEYAKLGGYKKITAIFEPHRYTRLAANLKEFAKAFESIDELVILPVYAAGEEPIELDLKAVFPKALFVEDIKREGRFLVASKGQVFEEGLIIGFGAGDISNKLRQKDE</sequence>